<gene>
    <name evidence="1" type="primary">mutL</name>
    <name type="ordered locus">PSPA7_5675</name>
</gene>
<protein>
    <recommendedName>
        <fullName evidence="1">DNA mismatch repair protein MutL</fullName>
    </recommendedName>
</protein>
<comment type="function">
    <text evidence="1">This protein is involved in the repair of mismatches in DNA. It is required for dam-dependent methyl-directed DNA mismatch repair. May act as a 'molecular matchmaker', a protein that promotes the formation of a stable complex between two or more DNA-binding proteins in an ATP-dependent manner without itself being part of a final effector complex.</text>
</comment>
<comment type="similarity">
    <text evidence="1">Belongs to the DNA mismatch repair MutL/HexB family.</text>
</comment>
<keyword id="KW-0227">DNA damage</keyword>
<keyword id="KW-0234">DNA repair</keyword>
<evidence type="ECO:0000255" key="1">
    <source>
        <dbReference type="HAMAP-Rule" id="MF_00149"/>
    </source>
</evidence>
<evidence type="ECO:0000256" key="2">
    <source>
        <dbReference type="SAM" id="MobiDB-lite"/>
    </source>
</evidence>
<reference key="1">
    <citation type="submission" date="2007-06" db="EMBL/GenBank/DDBJ databases">
        <authorList>
            <person name="Dodson R.J."/>
            <person name="Harkins D."/>
            <person name="Paulsen I.T."/>
        </authorList>
    </citation>
    <scope>NUCLEOTIDE SEQUENCE [LARGE SCALE GENOMIC DNA]</scope>
    <source>
        <strain>DSM 24068 / PA7</strain>
    </source>
</reference>
<name>MUTL_PSEP7</name>
<dbReference type="EMBL" id="CP000744">
    <property type="protein sequence ID" value="ABR85934.1"/>
    <property type="molecule type" value="Genomic_DNA"/>
</dbReference>
<dbReference type="RefSeq" id="WP_012077636.1">
    <property type="nucleotide sequence ID" value="NC_009656.1"/>
</dbReference>
<dbReference type="SMR" id="A6VD59"/>
<dbReference type="KEGG" id="pap:PSPA7_5675"/>
<dbReference type="HOGENOM" id="CLU_004131_4_2_6"/>
<dbReference type="Proteomes" id="UP000001582">
    <property type="component" value="Chromosome"/>
</dbReference>
<dbReference type="GO" id="GO:0032300">
    <property type="term" value="C:mismatch repair complex"/>
    <property type="evidence" value="ECO:0007669"/>
    <property type="project" value="InterPro"/>
</dbReference>
<dbReference type="GO" id="GO:0005524">
    <property type="term" value="F:ATP binding"/>
    <property type="evidence" value="ECO:0007669"/>
    <property type="project" value="InterPro"/>
</dbReference>
<dbReference type="GO" id="GO:0016887">
    <property type="term" value="F:ATP hydrolysis activity"/>
    <property type="evidence" value="ECO:0007669"/>
    <property type="project" value="InterPro"/>
</dbReference>
<dbReference type="GO" id="GO:0140664">
    <property type="term" value="F:ATP-dependent DNA damage sensor activity"/>
    <property type="evidence" value="ECO:0007669"/>
    <property type="project" value="InterPro"/>
</dbReference>
<dbReference type="GO" id="GO:0030983">
    <property type="term" value="F:mismatched DNA binding"/>
    <property type="evidence" value="ECO:0007669"/>
    <property type="project" value="InterPro"/>
</dbReference>
<dbReference type="GO" id="GO:0006298">
    <property type="term" value="P:mismatch repair"/>
    <property type="evidence" value="ECO:0007669"/>
    <property type="project" value="UniProtKB-UniRule"/>
</dbReference>
<dbReference type="CDD" id="cd16926">
    <property type="entry name" value="HATPase_MutL-MLH-PMS-like"/>
    <property type="match status" value="1"/>
</dbReference>
<dbReference type="CDD" id="cd03482">
    <property type="entry name" value="MutL_Trans_MutL"/>
    <property type="match status" value="1"/>
</dbReference>
<dbReference type="FunFam" id="3.30.230.10:FF:000013">
    <property type="entry name" value="DNA mismatch repair endonuclease MutL"/>
    <property type="match status" value="1"/>
</dbReference>
<dbReference type="FunFam" id="3.30.565.10:FF:000003">
    <property type="entry name" value="DNA mismatch repair endonuclease MutL"/>
    <property type="match status" value="1"/>
</dbReference>
<dbReference type="FunFam" id="3.30.1370.100:FF:000005">
    <property type="entry name" value="DNA mismatch repair protein MutL"/>
    <property type="match status" value="1"/>
</dbReference>
<dbReference type="Gene3D" id="3.30.230.10">
    <property type="match status" value="1"/>
</dbReference>
<dbReference type="Gene3D" id="3.30.565.10">
    <property type="entry name" value="Histidine kinase-like ATPase, C-terminal domain"/>
    <property type="match status" value="1"/>
</dbReference>
<dbReference type="Gene3D" id="3.30.1540.20">
    <property type="entry name" value="MutL, C-terminal domain, dimerisation subdomain"/>
    <property type="match status" value="1"/>
</dbReference>
<dbReference type="Gene3D" id="3.30.1370.100">
    <property type="entry name" value="MutL, C-terminal domain, regulatory subdomain"/>
    <property type="match status" value="1"/>
</dbReference>
<dbReference type="HAMAP" id="MF_00149">
    <property type="entry name" value="DNA_mis_repair"/>
    <property type="match status" value="1"/>
</dbReference>
<dbReference type="InterPro" id="IPR014762">
    <property type="entry name" value="DNA_mismatch_repair_CS"/>
</dbReference>
<dbReference type="InterPro" id="IPR020667">
    <property type="entry name" value="DNA_mismatch_repair_MutL"/>
</dbReference>
<dbReference type="InterPro" id="IPR013507">
    <property type="entry name" value="DNA_mismatch_S5_2-like"/>
</dbReference>
<dbReference type="InterPro" id="IPR036890">
    <property type="entry name" value="HATPase_C_sf"/>
</dbReference>
<dbReference type="InterPro" id="IPR002099">
    <property type="entry name" value="MutL/Mlh/PMS"/>
</dbReference>
<dbReference type="InterPro" id="IPR038973">
    <property type="entry name" value="MutL/Mlh/Pms-like"/>
</dbReference>
<dbReference type="InterPro" id="IPR014790">
    <property type="entry name" value="MutL_C"/>
</dbReference>
<dbReference type="InterPro" id="IPR042120">
    <property type="entry name" value="MutL_C_dimsub"/>
</dbReference>
<dbReference type="InterPro" id="IPR042121">
    <property type="entry name" value="MutL_C_regsub"/>
</dbReference>
<dbReference type="InterPro" id="IPR037198">
    <property type="entry name" value="MutL_C_sf"/>
</dbReference>
<dbReference type="InterPro" id="IPR020568">
    <property type="entry name" value="Ribosomal_Su5_D2-typ_SF"/>
</dbReference>
<dbReference type="InterPro" id="IPR014721">
    <property type="entry name" value="Ribsml_uS5_D2-typ_fold_subgr"/>
</dbReference>
<dbReference type="NCBIfam" id="TIGR00585">
    <property type="entry name" value="mutl"/>
    <property type="match status" value="1"/>
</dbReference>
<dbReference type="NCBIfam" id="NF000949">
    <property type="entry name" value="PRK00095.1-2"/>
    <property type="match status" value="1"/>
</dbReference>
<dbReference type="PANTHER" id="PTHR10073">
    <property type="entry name" value="DNA MISMATCH REPAIR PROTEIN MLH, PMS, MUTL"/>
    <property type="match status" value="1"/>
</dbReference>
<dbReference type="PANTHER" id="PTHR10073:SF12">
    <property type="entry name" value="DNA MISMATCH REPAIR PROTEIN MLH1"/>
    <property type="match status" value="1"/>
</dbReference>
<dbReference type="Pfam" id="PF01119">
    <property type="entry name" value="DNA_mis_repair"/>
    <property type="match status" value="1"/>
</dbReference>
<dbReference type="Pfam" id="PF13589">
    <property type="entry name" value="HATPase_c_3"/>
    <property type="match status" value="1"/>
</dbReference>
<dbReference type="Pfam" id="PF08676">
    <property type="entry name" value="MutL_C"/>
    <property type="match status" value="1"/>
</dbReference>
<dbReference type="SMART" id="SM01340">
    <property type="entry name" value="DNA_mis_repair"/>
    <property type="match status" value="1"/>
</dbReference>
<dbReference type="SMART" id="SM00853">
    <property type="entry name" value="MutL_C"/>
    <property type="match status" value="1"/>
</dbReference>
<dbReference type="SUPFAM" id="SSF55874">
    <property type="entry name" value="ATPase domain of HSP90 chaperone/DNA topoisomerase II/histidine kinase"/>
    <property type="match status" value="1"/>
</dbReference>
<dbReference type="SUPFAM" id="SSF118116">
    <property type="entry name" value="DNA mismatch repair protein MutL"/>
    <property type="match status" value="1"/>
</dbReference>
<dbReference type="SUPFAM" id="SSF54211">
    <property type="entry name" value="Ribosomal protein S5 domain 2-like"/>
    <property type="match status" value="1"/>
</dbReference>
<dbReference type="PROSITE" id="PS00058">
    <property type="entry name" value="DNA_MISMATCH_REPAIR_1"/>
    <property type="match status" value="1"/>
</dbReference>
<sequence length="633" mass="69716">MSEAPRIQLLSPRLANQIAAGEVVERPASVAKELLENSLDAGARRIDVEVEQGGVKLLRVRDDGRGIPADDLPLALARHATSKIRELEDLERVMSLGFRGEALASISSVARLTMTSRTADAGEAWQVETEGRDMQPRVQPAAHPVGTSVEVRDLFFNTPARRKFLRAEKTEFDHLQEVIKRLALARFDVAFHLRHNGKTIFALHEARDELARARRVGAVCGQAFLEQALPIEVERNGLHLWGWVGLPTFSRSQPDLQYFYVNGRMVRDKLVAHAVRQAYRDVLYNGRHPTFVLFFEVDPAVVDVNVHPTKHEVRFRDSRMVHDFLYGTLHRALGEVRPDDQLAPPGATSLTEPRPTGAAAGEFGPQGEMRLAESVLESPAARVGWSGGASSSGASSGYSAYTRPEAPPSLAEAGGAYKAYFAPLPAGEAPAALPESAQDIPPLGYALAQLKGIYILAENAHGLVLVDMHAAHERITYERLKVAMASEGLRGQPLLVPESIAVSEREADCAEEHSGWFQRLGFELQRLGPETLAIRQIPALLKQAEATQLVRDVIADLLEYGTSDRIQAHLNELLGTMACHGAVRANRRLTLPEMNALLRDMEITERSGQCNHGRPTWTQLGLDELDKLFLRGR</sequence>
<organism>
    <name type="scientific">Pseudomonas paraeruginosa (strain DSM 24068 / PA7)</name>
    <name type="common">Pseudomonas aeruginosa (strain PA7)</name>
    <dbReference type="NCBI Taxonomy" id="381754"/>
    <lineage>
        <taxon>Bacteria</taxon>
        <taxon>Pseudomonadati</taxon>
        <taxon>Pseudomonadota</taxon>
        <taxon>Gammaproteobacteria</taxon>
        <taxon>Pseudomonadales</taxon>
        <taxon>Pseudomonadaceae</taxon>
        <taxon>Pseudomonas</taxon>
        <taxon>Pseudomonas paraeruginosa</taxon>
    </lineage>
</organism>
<proteinExistence type="inferred from homology"/>
<feature type="chain" id="PRO_1000010057" description="DNA mismatch repair protein MutL">
    <location>
        <begin position="1"/>
        <end position="633"/>
    </location>
</feature>
<feature type="region of interest" description="Disordered" evidence="2">
    <location>
        <begin position="336"/>
        <end position="364"/>
    </location>
</feature>
<feature type="region of interest" description="Disordered" evidence="2">
    <location>
        <begin position="384"/>
        <end position="405"/>
    </location>
</feature>
<feature type="compositionally biased region" description="Low complexity" evidence="2">
    <location>
        <begin position="388"/>
        <end position="401"/>
    </location>
</feature>
<accession>A6VD59</accession>